<evidence type="ECO:0000255" key="1">
    <source>
        <dbReference type="HAMAP-Rule" id="MF_00054"/>
    </source>
</evidence>
<protein>
    <recommendedName>
        <fullName evidence="1">Elongation factor G</fullName>
        <shortName evidence="1">EF-G</shortName>
    </recommendedName>
</protein>
<gene>
    <name evidence="1" type="primary">fusA</name>
    <name type="ordered locus">Rcas_4029</name>
</gene>
<proteinExistence type="inferred from homology"/>
<name>EFG_ROSCS</name>
<keyword id="KW-0963">Cytoplasm</keyword>
<keyword id="KW-0251">Elongation factor</keyword>
<keyword id="KW-0342">GTP-binding</keyword>
<keyword id="KW-0547">Nucleotide-binding</keyword>
<keyword id="KW-0648">Protein biosynthesis</keyword>
<keyword id="KW-1185">Reference proteome</keyword>
<feature type="chain" id="PRO_1000074969" description="Elongation factor G">
    <location>
        <begin position="1"/>
        <end position="701"/>
    </location>
</feature>
<feature type="domain" description="tr-type G">
    <location>
        <begin position="8"/>
        <end position="286"/>
    </location>
</feature>
<feature type="binding site" evidence="1">
    <location>
        <begin position="17"/>
        <end position="24"/>
    </location>
    <ligand>
        <name>GTP</name>
        <dbReference type="ChEBI" id="CHEBI:37565"/>
    </ligand>
</feature>
<feature type="binding site" evidence="1">
    <location>
        <begin position="85"/>
        <end position="89"/>
    </location>
    <ligand>
        <name>GTP</name>
        <dbReference type="ChEBI" id="CHEBI:37565"/>
    </ligand>
</feature>
<feature type="binding site" evidence="1">
    <location>
        <begin position="139"/>
        <end position="142"/>
    </location>
    <ligand>
        <name>GTP</name>
        <dbReference type="ChEBI" id="CHEBI:37565"/>
    </ligand>
</feature>
<dbReference type="EMBL" id="CP000804">
    <property type="protein sequence ID" value="ABU60062.1"/>
    <property type="molecule type" value="Genomic_DNA"/>
</dbReference>
<dbReference type="RefSeq" id="WP_012122484.1">
    <property type="nucleotide sequence ID" value="NC_009767.1"/>
</dbReference>
<dbReference type="SMR" id="A7NR66"/>
<dbReference type="STRING" id="383372.Rcas_4029"/>
<dbReference type="KEGG" id="rca:Rcas_4029"/>
<dbReference type="eggNOG" id="COG0480">
    <property type="taxonomic scope" value="Bacteria"/>
</dbReference>
<dbReference type="HOGENOM" id="CLU_002794_4_1_0"/>
<dbReference type="OrthoDB" id="9804431at2"/>
<dbReference type="Proteomes" id="UP000000263">
    <property type="component" value="Chromosome"/>
</dbReference>
<dbReference type="GO" id="GO:0005737">
    <property type="term" value="C:cytoplasm"/>
    <property type="evidence" value="ECO:0007669"/>
    <property type="project" value="UniProtKB-SubCell"/>
</dbReference>
<dbReference type="GO" id="GO:0005525">
    <property type="term" value="F:GTP binding"/>
    <property type="evidence" value="ECO:0007669"/>
    <property type="project" value="UniProtKB-UniRule"/>
</dbReference>
<dbReference type="GO" id="GO:0003924">
    <property type="term" value="F:GTPase activity"/>
    <property type="evidence" value="ECO:0007669"/>
    <property type="project" value="InterPro"/>
</dbReference>
<dbReference type="GO" id="GO:0003746">
    <property type="term" value="F:translation elongation factor activity"/>
    <property type="evidence" value="ECO:0007669"/>
    <property type="project" value="UniProtKB-UniRule"/>
</dbReference>
<dbReference type="GO" id="GO:0032790">
    <property type="term" value="P:ribosome disassembly"/>
    <property type="evidence" value="ECO:0007669"/>
    <property type="project" value="TreeGrafter"/>
</dbReference>
<dbReference type="CDD" id="cd01886">
    <property type="entry name" value="EF-G"/>
    <property type="match status" value="1"/>
</dbReference>
<dbReference type="CDD" id="cd16262">
    <property type="entry name" value="EFG_III"/>
    <property type="match status" value="1"/>
</dbReference>
<dbReference type="CDD" id="cd01434">
    <property type="entry name" value="EFG_mtEFG1_IV"/>
    <property type="match status" value="1"/>
</dbReference>
<dbReference type="CDD" id="cd03713">
    <property type="entry name" value="EFG_mtEFG_C"/>
    <property type="match status" value="1"/>
</dbReference>
<dbReference type="CDD" id="cd04088">
    <property type="entry name" value="EFG_mtEFG_II"/>
    <property type="match status" value="1"/>
</dbReference>
<dbReference type="FunFam" id="2.40.30.10:FF:000006">
    <property type="entry name" value="Elongation factor G"/>
    <property type="match status" value="1"/>
</dbReference>
<dbReference type="FunFam" id="3.30.230.10:FF:000003">
    <property type="entry name" value="Elongation factor G"/>
    <property type="match status" value="1"/>
</dbReference>
<dbReference type="FunFam" id="3.30.70.240:FF:000001">
    <property type="entry name" value="Elongation factor G"/>
    <property type="match status" value="1"/>
</dbReference>
<dbReference type="FunFam" id="3.30.70.870:FF:000001">
    <property type="entry name" value="Elongation factor G"/>
    <property type="match status" value="1"/>
</dbReference>
<dbReference type="FunFam" id="3.40.50.300:FF:000029">
    <property type="entry name" value="Elongation factor G"/>
    <property type="match status" value="1"/>
</dbReference>
<dbReference type="Gene3D" id="3.30.230.10">
    <property type="match status" value="1"/>
</dbReference>
<dbReference type="Gene3D" id="3.30.70.240">
    <property type="match status" value="1"/>
</dbReference>
<dbReference type="Gene3D" id="3.30.70.870">
    <property type="entry name" value="Elongation Factor G (Translational Gtpase), domain 3"/>
    <property type="match status" value="1"/>
</dbReference>
<dbReference type="Gene3D" id="3.40.50.300">
    <property type="entry name" value="P-loop containing nucleotide triphosphate hydrolases"/>
    <property type="match status" value="1"/>
</dbReference>
<dbReference type="Gene3D" id="2.40.30.10">
    <property type="entry name" value="Translation factors"/>
    <property type="match status" value="1"/>
</dbReference>
<dbReference type="HAMAP" id="MF_00054_B">
    <property type="entry name" value="EF_G_EF_2_B"/>
    <property type="match status" value="1"/>
</dbReference>
<dbReference type="InterPro" id="IPR053905">
    <property type="entry name" value="EF-G-like_DII"/>
</dbReference>
<dbReference type="InterPro" id="IPR041095">
    <property type="entry name" value="EFG_II"/>
</dbReference>
<dbReference type="InterPro" id="IPR009022">
    <property type="entry name" value="EFG_III"/>
</dbReference>
<dbReference type="InterPro" id="IPR035647">
    <property type="entry name" value="EFG_III/V"/>
</dbReference>
<dbReference type="InterPro" id="IPR047872">
    <property type="entry name" value="EFG_IV"/>
</dbReference>
<dbReference type="InterPro" id="IPR035649">
    <property type="entry name" value="EFG_V"/>
</dbReference>
<dbReference type="InterPro" id="IPR000640">
    <property type="entry name" value="EFG_V-like"/>
</dbReference>
<dbReference type="InterPro" id="IPR031157">
    <property type="entry name" value="G_TR_CS"/>
</dbReference>
<dbReference type="InterPro" id="IPR027417">
    <property type="entry name" value="P-loop_NTPase"/>
</dbReference>
<dbReference type="InterPro" id="IPR020568">
    <property type="entry name" value="Ribosomal_Su5_D2-typ_SF"/>
</dbReference>
<dbReference type="InterPro" id="IPR014721">
    <property type="entry name" value="Ribsml_uS5_D2-typ_fold_subgr"/>
</dbReference>
<dbReference type="InterPro" id="IPR005225">
    <property type="entry name" value="Small_GTP-bd"/>
</dbReference>
<dbReference type="InterPro" id="IPR000795">
    <property type="entry name" value="T_Tr_GTP-bd_dom"/>
</dbReference>
<dbReference type="InterPro" id="IPR009000">
    <property type="entry name" value="Transl_B-barrel_sf"/>
</dbReference>
<dbReference type="InterPro" id="IPR004540">
    <property type="entry name" value="Transl_elong_EFG/EF2"/>
</dbReference>
<dbReference type="InterPro" id="IPR005517">
    <property type="entry name" value="Transl_elong_EFG/EF2_IV"/>
</dbReference>
<dbReference type="NCBIfam" id="TIGR00484">
    <property type="entry name" value="EF-G"/>
    <property type="match status" value="1"/>
</dbReference>
<dbReference type="NCBIfam" id="NF009379">
    <property type="entry name" value="PRK12740.1-3"/>
    <property type="match status" value="1"/>
</dbReference>
<dbReference type="NCBIfam" id="NF009381">
    <property type="entry name" value="PRK12740.1-5"/>
    <property type="match status" value="1"/>
</dbReference>
<dbReference type="NCBIfam" id="NF009891">
    <property type="entry name" value="PRK13351.1-1"/>
    <property type="match status" value="1"/>
</dbReference>
<dbReference type="NCBIfam" id="TIGR00231">
    <property type="entry name" value="small_GTP"/>
    <property type="match status" value="1"/>
</dbReference>
<dbReference type="PANTHER" id="PTHR43261:SF1">
    <property type="entry name" value="RIBOSOME-RELEASING FACTOR 2, MITOCHONDRIAL"/>
    <property type="match status" value="1"/>
</dbReference>
<dbReference type="PANTHER" id="PTHR43261">
    <property type="entry name" value="TRANSLATION ELONGATION FACTOR G-RELATED"/>
    <property type="match status" value="1"/>
</dbReference>
<dbReference type="Pfam" id="PF22042">
    <property type="entry name" value="EF-G_D2"/>
    <property type="match status" value="1"/>
</dbReference>
<dbReference type="Pfam" id="PF00679">
    <property type="entry name" value="EFG_C"/>
    <property type="match status" value="1"/>
</dbReference>
<dbReference type="Pfam" id="PF14492">
    <property type="entry name" value="EFG_III"/>
    <property type="match status" value="1"/>
</dbReference>
<dbReference type="Pfam" id="PF03764">
    <property type="entry name" value="EFG_IV"/>
    <property type="match status" value="1"/>
</dbReference>
<dbReference type="Pfam" id="PF00009">
    <property type="entry name" value="GTP_EFTU"/>
    <property type="match status" value="1"/>
</dbReference>
<dbReference type="PRINTS" id="PR00315">
    <property type="entry name" value="ELONGATNFCT"/>
</dbReference>
<dbReference type="SMART" id="SM00838">
    <property type="entry name" value="EFG_C"/>
    <property type="match status" value="1"/>
</dbReference>
<dbReference type="SMART" id="SM00889">
    <property type="entry name" value="EFG_IV"/>
    <property type="match status" value="1"/>
</dbReference>
<dbReference type="SUPFAM" id="SSF54980">
    <property type="entry name" value="EF-G C-terminal domain-like"/>
    <property type="match status" value="2"/>
</dbReference>
<dbReference type="SUPFAM" id="SSF52540">
    <property type="entry name" value="P-loop containing nucleoside triphosphate hydrolases"/>
    <property type="match status" value="1"/>
</dbReference>
<dbReference type="SUPFAM" id="SSF54211">
    <property type="entry name" value="Ribosomal protein S5 domain 2-like"/>
    <property type="match status" value="1"/>
</dbReference>
<dbReference type="SUPFAM" id="SSF50447">
    <property type="entry name" value="Translation proteins"/>
    <property type="match status" value="1"/>
</dbReference>
<dbReference type="PROSITE" id="PS00301">
    <property type="entry name" value="G_TR_1"/>
    <property type="match status" value="1"/>
</dbReference>
<dbReference type="PROSITE" id="PS51722">
    <property type="entry name" value="G_TR_2"/>
    <property type="match status" value="1"/>
</dbReference>
<comment type="function">
    <text evidence="1">Catalyzes the GTP-dependent ribosomal translocation step during translation elongation. During this step, the ribosome changes from the pre-translocational (PRE) to the post-translocational (POST) state as the newly formed A-site-bound peptidyl-tRNA and P-site-bound deacylated tRNA move to the P and E sites, respectively. Catalyzes the coordinated movement of the two tRNA molecules, the mRNA and conformational changes in the ribosome.</text>
</comment>
<comment type="subcellular location">
    <subcellularLocation>
        <location evidence="1">Cytoplasm</location>
    </subcellularLocation>
</comment>
<comment type="similarity">
    <text evidence="1">Belongs to the TRAFAC class translation factor GTPase superfamily. Classic translation factor GTPase family. EF-G/EF-2 subfamily.</text>
</comment>
<reference key="1">
    <citation type="submission" date="2007-08" db="EMBL/GenBank/DDBJ databases">
        <title>Complete sequence of Roseiflexus castenholzii DSM 13941.</title>
        <authorList>
            <consortium name="US DOE Joint Genome Institute"/>
            <person name="Copeland A."/>
            <person name="Lucas S."/>
            <person name="Lapidus A."/>
            <person name="Barry K."/>
            <person name="Glavina del Rio T."/>
            <person name="Dalin E."/>
            <person name="Tice H."/>
            <person name="Pitluck S."/>
            <person name="Thompson L.S."/>
            <person name="Brettin T."/>
            <person name="Bruce D."/>
            <person name="Detter J.C."/>
            <person name="Han C."/>
            <person name="Tapia R."/>
            <person name="Schmutz J."/>
            <person name="Larimer F."/>
            <person name="Land M."/>
            <person name="Hauser L."/>
            <person name="Kyrpides N."/>
            <person name="Mikhailova N."/>
            <person name="Bryant D.A."/>
            <person name="Hanada S."/>
            <person name="Tsukatani Y."/>
            <person name="Richardson P."/>
        </authorList>
    </citation>
    <scope>NUCLEOTIDE SEQUENCE [LARGE SCALE GENOMIC DNA]</scope>
    <source>
        <strain>DSM 13941 / HLO8</strain>
    </source>
</reference>
<accession>A7NR66</accession>
<organism>
    <name type="scientific">Roseiflexus castenholzii (strain DSM 13941 / HLO8)</name>
    <dbReference type="NCBI Taxonomy" id="383372"/>
    <lineage>
        <taxon>Bacteria</taxon>
        <taxon>Bacillati</taxon>
        <taxon>Chloroflexota</taxon>
        <taxon>Chloroflexia</taxon>
        <taxon>Chloroflexales</taxon>
        <taxon>Roseiflexineae</taxon>
        <taxon>Roseiflexaceae</taxon>
        <taxon>Roseiflexus</taxon>
    </lineage>
</organism>
<sequence>MPREVPLERIRNIGIIAHIDAGKTTTTERILFYTGRTYKLGEVHEGTAVMDWMEQERERGITITAAATTAEWTVEGTPYRINIIDTPGHVDFTAEVERSLRVLDGGVVVFDAVAGVEPQSETVWRQADKYHVPRICFVNKMDRIGANFMRTVDMIRERLGAKPVPVQFPIGAEDRFRGIVDLITNKAVIYVDDQGKREELEAIPADVADEVERLRNEMIEAIAETDDELTLLYLEGEELSVEELRRALRKATIQGKLVPVLCGAALRNKGVQRLLDAVVYYLPSPVDIPPVRGTRPGQIAGDDGVEMITRPTSEDAPFTGLVFKIVSDPFVGKLAYFRVYSGKLETGSYVLNSTRNQRERIGRLLQMHANHREEIKEVYAGDIAAMVGPKQSYTGDTICDPNDPIVLESIRFPEPVIQLAIEPKTKADQDKLAVALGKLAEEDPTFRVFTDPETGQTIIAGMGELHLEVIVDRMRREYKVEANQGKPQVAYRESITVPADVDSKFVRQSGGKGQYGHVKLQVEPLERGKGFEFVNGIVGGVIPREYIPAVEAGVKEAMASGVIAGYPVVDIKVTLYDGSYHEVDSSEMAFKIAASMGLKEAVRKGRPILLEPVMKVEIVTPEDFLGAVLGDINSRRGHVEGMEARGNAQVIRAYVPLASMFGYTTDLRSATQGRATSSMEFAYYQPLPDALAKEIIEKRRG</sequence>